<dbReference type="EC" id="4.6.1.-" evidence="4"/>
<dbReference type="EMBL" id="FJ171474">
    <property type="protein sequence ID" value="ACN48970.1"/>
    <property type="molecule type" value="mRNA"/>
</dbReference>
<dbReference type="SMR" id="C0JB39"/>
<dbReference type="GO" id="GO:0005576">
    <property type="term" value="C:extracellular region"/>
    <property type="evidence" value="ECO:0007669"/>
    <property type="project" value="UniProtKB-SubCell"/>
</dbReference>
<dbReference type="GO" id="GO:0016829">
    <property type="term" value="F:lyase activity"/>
    <property type="evidence" value="ECO:0007669"/>
    <property type="project" value="UniProtKB-KW"/>
</dbReference>
<dbReference type="GO" id="GO:0046872">
    <property type="term" value="F:metal ion binding"/>
    <property type="evidence" value="ECO:0007669"/>
    <property type="project" value="UniProtKB-KW"/>
</dbReference>
<dbReference type="GO" id="GO:0008081">
    <property type="term" value="F:phosphoric diester hydrolase activity"/>
    <property type="evidence" value="ECO:0007669"/>
    <property type="project" value="InterPro"/>
</dbReference>
<dbReference type="GO" id="GO:0090729">
    <property type="term" value="F:toxin activity"/>
    <property type="evidence" value="ECO:0007669"/>
    <property type="project" value="UniProtKB-KW"/>
</dbReference>
<dbReference type="GO" id="GO:0031640">
    <property type="term" value="P:killing of cells of another organism"/>
    <property type="evidence" value="ECO:0007669"/>
    <property type="project" value="UniProtKB-KW"/>
</dbReference>
<dbReference type="GO" id="GO:0016042">
    <property type="term" value="P:lipid catabolic process"/>
    <property type="evidence" value="ECO:0007669"/>
    <property type="project" value="UniProtKB-KW"/>
</dbReference>
<dbReference type="CDD" id="cd08576">
    <property type="entry name" value="GDPD_like_SMaseD_PLD"/>
    <property type="match status" value="1"/>
</dbReference>
<dbReference type="Gene3D" id="3.20.20.190">
    <property type="entry name" value="Phosphatidylinositol (PI) phosphodiesterase"/>
    <property type="match status" value="1"/>
</dbReference>
<dbReference type="InterPro" id="IPR017946">
    <property type="entry name" value="PLC-like_Pdiesterase_TIM-brl"/>
</dbReference>
<dbReference type="Pfam" id="PF13653">
    <property type="entry name" value="GDPD_2"/>
    <property type="match status" value="1"/>
</dbReference>
<dbReference type="SUPFAM" id="SSF51695">
    <property type="entry name" value="PLC-like phosphodiesterases"/>
    <property type="match status" value="1"/>
</dbReference>
<sequence>WIMGHMVNDLDLVDEYLDDGANSLELDVEFSKSGTALRTYHGVPCDCFRSCTRSEKFSKYLDYIRQLTTPGNSKFRSRLILLVLDLKLNPLSSSAAYNAGADVARNLLDNYWQRGESKARAYIVLSLETIAGAEFITGFKDIMKKEGFDEKYYDKIGWDFSGNEDLGKIRDVLESHGIREHIWQGDGITNCLPRDDNRLKQAISRRYSPTYVYADKVYTWSIDKESSIENALRLGVDGVMTNYPARVISVLGEREFSGKLRLATYDDNPWEK</sequence>
<comment type="function">
    <text evidence="2 3">Dermonecrotic toxins cleave the phosphodiester linkage between the phosphate and headgroup of certain phospholipids (sphingolipid and lysolipid substrates), forming an alcohol (often choline) and a cyclic phosphate. This toxin acts on lysophosphatidylethanolamine (LPE) and ceramide phosphoethanolamine (CPE) with high activity. This toxin acts on sphingomyelin (SM) with very low activity and is not active on lysophosphatidylserine (LPS), lysophosphatidylcholine (LPC) and lysophosphatidylglycerol (LPG). It acts by transphosphatidylation, releasing exclusively cyclic phosphate as second products. It is not surprising that spider toxins have affinity for ethanolamine-containing sphingolipids since they are common in insect prey (By similarity). Induces dermonecrosis, hemolysis, increased vascular permeability, edema, inflammatory response, and platelet aggregation (By similarity).</text>
</comment>
<comment type="catalytic activity">
    <reaction evidence="2">
        <text>an N-(acyl)-sphingosylphosphocholine = an N-(acyl)-sphingosyl-1,3-cyclic phosphate + choline</text>
        <dbReference type="Rhea" id="RHEA:60652"/>
        <dbReference type="ChEBI" id="CHEBI:15354"/>
        <dbReference type="ChEBI" id="CHEBI:64583"/>
        <dbReference type="ChEBI" id="CHEBI:143892"/>
    </reaction>
</comment>
<comment type="catalytic activity">
    <reaction evidence="2">
        <text>N-hexanoyl-sphing-4-enine-1-phosphocholine = N-(hexanoyl)-sphing-4-enine-1,3-cyclic phosphate + choline</text>
        <dbReference type="Rhea" id="RHEA:60620"/>
        <dbReference type="ChEBI" id="CHEBI:15354"/>
        <dbReference type="ChEBI" id="CHEBI:78254"/>
        <dbReference type="ChEBI" id="CHEBI:143883"/>
    </reaction>
</comment>
<comment type="catalytic activity">
    <reaction evidence="2">
        <text>an N-(acyl)-sphingosylphosphoethanolamine = an N-(acyl)-sphingosyl-1,3-cyclic phosphate + ethanolamine</text>
        <dbReference type="Rhea" id="RHEA:60648"/>
        <dbReference type="ChEBI" id="CHEBI:57603"/>
        <dbReference type="ChEBI" id="CHEBI:143891"/>
        <dbReference type="ChEBI" id="CHEBI:143892"/>
    </reaction>
</comment>
<comment type="catalytic activity">
    <reaction evidence="2">
        <text>N-dodecanoyl-heptadecasphing-4-enine-1-phosphoethanolamine = N-dodecanoyl-heptadecasphing-4-enine-1,3-cyclic phosphate + ethanolamine</text>
        <dbReference type="Rhea" id="RHEA:60616"/>
        <dbReference type="ChEBI" id="CHEBI:57603"/>
        <dbReference type="ChEBI" id="CHEBI:143864"/>
        <dbReference type="ChEBI" id="CHEBI:143865"/>
    </reaction>
</comment>
<comment type="catalytic activity">
    <reaction evidence="2">
        <text>a 1-acyl-sn-glycero-3-phosphoethanolamine = a 1-acyl-sn-glycero-2,3-cyclic phosphate + ethanolamine</text>
        <dbReference type="Rhea" id="RHEA:60704"/>
        <dbReference type="ChEBI" id="CHEBI:57603"/>
        <dbReference type="ChEBI" id="CHEBI:64381"/>
        <dbReference type="ChEBI" id="CHEBI:143947"/>
    </reaction>
</comment>
<comment type="catalytic activity">
    <reaction evidence="2">
        <text>1-tetradecanoyl-sn-glycero-3-phosphoethanolamine = 1-tetradecanoyl-sn-glycero-2,3-cyclic phosphate + ethanolamine</text>
        <dbReference type="Rhea" id="RHEA:60608"/>
        <dbReference type="ChEBI" id="CHEBI:57603"/>
        <dbReference type="ChEBI" id="CHEBI:84299"/>
        <dbReference type="ChEBI" id="CHEBI:143882"/>
    </reaction>
</comment>
<comment type="cofactor">
    <cofactor evidence="5">
        <name>Mg(2+)</name>
        <dbReference type="ChEBI" id="CHEBI:18420"/>
    </cofactor>
    <text evidence="5">Binds 1 Mg(2+) ion per subunit.</text>
</comment>
<comment type="subcellular location">
    <subcellularLocation>
        <location evidence="9">Secreted</location>
    </subcellularLocation>
</comment>
<comment type="tissue specificity">
    <text evidence="9">Expressed by the venom gland.</text>
</comment>
<comment type="similarity">
    <text evidence="7">Belongs to the arthropod phospholipase D family. Class II subfamily. Class IIb sub-subfamily.</text>
</comment>
<comment type="caution">
    <text evidence="1 2 4">The most common activity assay for dermonecrotic toxins detects enzymatic activity by monitoring choline release from substrate. Liberation of choline from sphingomyelin (SM) or lysophosphatidylcholine (LPC) is commonly assumed to result from substrate hydrolysis, giving either ceramide-1-phosphate (C1P) or lysophosphatidic acid (LPA), respectively, as a second product. However, two studies from Lajoie and colleagues (2013 and 2015) report the observation of exclusive formation of cyclic phosphate products as second products, resulting from intramolecular transphosphatidylation. Cyclic phosphates have vastly different biological properties from their monoester counterparts, and they may be relevant to the pathology of brown spider envenomation.</text>
</comment>
<protein>
    <recommendedName>
        <fullName evidence="6">Dermonecrotic toxin StSicTox-betaIC1</fullName>
        <ecNumber evidence="4">4.6.1.-</ecNumber>
    </recommendedName>
    <alternativeName>
        <fullName>Phospholipase D</fullName>
        <shortName>PLD</shortName>
    </alternativeName>
    <alternativeName>
        <fullName>Sphingomyelin phosphodiesterase D</fullName>
        <shortName>SMD</shortName>
        <shortName>SMase D</shortName>
        <shortName>Sphingomyelinase D</shortName>
    </alternativeName>
</protein>
<reference key="1">
    <citation type="journal article" date="2009" name="Mol. Biol. Evol.">
        <title>Molecular evolution, functional variation, and proposed nomenclature of the gene family that includes sphingomyelinase D in sicariid spider venoms.</title>
        <authorList>
            <person name="Binford G.J."/>
            <person name="Bodner M.R."/>
            <person name="Cordes M.H."/>
            <person name="Baldwin K.L."/>
            <person name="Rynerson M.R."/>
            <person name="Burns S.N."/>
            <person name="Zobel-Thropp P.A."/>
        </authorList>
    </citation>
    <scope>NUCLEOTIDE SEQUENCE [MRNA]</scope>
    <scope>NOMENCLATURE</scope>
    <source>
        <tissue>Venom gland</tissue>
    </source>
</reference>
<reference key="2">
    <citation type="journal article" date="2006" name="Biochem. Biophys. Res. Commun.">
        <title>Structural insights into the catalytic mechanism of sphingomyelinases D and evolutionary relationship to glycerophosphodiester phosphodiesterases.</title>
        <authorList>
            <person name="Murakami M.T."/>
            <person name="Fernandes-Pedrosa M.F."/>
            <person name="de Andrade S.A."/>
            <person name="Gabdoulkhakov A."/>
            <person name="Betzel C."/>
            <person name="Tambourgi D.V."/>
            <person name="Arni R.K."/>
        </authorList>
    </citation>
    <scope>IMPORTANT SITES FOR ACTIVITY ON SPHINGOMYELIN</scope>
</reference>
<name>B1O_SICTE</name>
<keyword id="KW-0204">Cytolysis</keyword>
<keyword id="KW-1061">Dermonecrotic toxin</keyword>
<keyword id="KW-1015">Disulfide bond</keyword>
<keyword id="KW-0354">Hemolysis</keyword>
<keyword id="KW-0442">Lipid degradation</keyword>
<keyword id="KW-0443">Lipid metabolism</keyword>
<keyword id="KW-0456">Lyase</keyword>
<keyword id="KW-0460">Magnesium</keyword>
<keyword id="KW-0479">Metal-binding</keyword>
<keyword id="KW-0964">Secreted</keyword>
<keyword id="KW-0800">Toxin</keyword>
<organism>
    <name type="scientific">Sicarius terrosus</name>
    <name type="common">Cave spider</name>
    <dbReference type="NCBI Taxonomy" id="571544"/>
    <lineage>
        <taxon>Eukaryota</taxon>
        <taxon>Metazoa</taxon>
        <taxon>Ecdysozoa</taxon>
        <taxon>Arthropoda</taxon>
        <taxon>Chelicerata</taxon>
        <taxon>Arachnida</taxon>
        <taxon>Araneae</taxon>
        <taxon>Araneomorphae</taxon>
        <taxon>Haplogynae</taxon>
        <taxon>Scytodoidea</taxon>
        <taxon>Sicariidae</taxon>
        <taxon>Sicarius</taxon>
    </lineage>
</organism>
<evidence type="ECO:0000250" key="1">
    <source>
        <dbReference type="UniProtKB" id="A0A0D4WTV1"/>
    </source>
</evidence>
<evidence type="ECO:0000250" key="2">
    <source>
        <dbReference type="UniProtKB" id="A0A0D4WV12"/>
    </source>
</evidence>
<evidence type="ECO:0000250" key="3">
    <source>
        <dbReference type="UniProtKB" id="P0CE80"/>
    </source>
</evidence>
<evidence type="ECO:0000250" key="4">
    <source>
        <dbReference type="UniProtKB" id="Q4ZFU2"/>
    </source>
</evidence>
<evidence type="ECO:0000250" key="5">
    <source>
        <dbReference type="UniProtKB" id="Q8I914"/>
    </source>
</evidence>
<evidence type="ECO:0000303" key="6">
    <source>
    </source>
</evidence>
<evidence type="ECO:0000305" key="7"/>
<evidence type="ECO:0000305" key="8">
    <source>
    </source>
</evidence>
<evidence type="ECO:0000305" key="9">
    <source>
    </source>
</evidence>
<feature type="chain" id="PRO_0000392855" description="Dermonecrotic toxin StSicTox-betaIC1">
    <location>
        <begin position="1" status="less than"/>
        <end position="272"/>
    </location>
</feature>
<feature type="active site" evidence="5">
    <location>
        <position position="5"/>
    </location>
</feature>
<feature type="active site" description="Nucleophile" evidence="5">
    <location>
        <position position="41"/>
    </location>
</feature>
<feature type="binding site" evidence="5">
    <location>
        <position position="25"/>
    </location>
    <ligand>
        <name>Mg(2+)</name>
        <dbReference type="ChEBI" id="CHEBI:18420"/>
    </ligand>
</feature>
<feature type="binding site" evidence="5">
    <location>
        <position position="27"/>
    </location>
    <ligand>
        <name>Mg(2+)</name>
        <dbReference type="ChEBI" id="CHEBI:18420"/>
    </ligand>
</feature>
<feature type="binding site" evidence="5">
    <location>
        <position position="85"/>
    </location>
    <ligand>
        <name>Mg(2+)</name>
        <dbReference type="ChEBI" id="CHEBI:18420"/>
    </ligand>
</feature>
<feature type="site" description="May prevent sphingomyelin recognition" evidence="8">
    <location>
        <position position="89"/>
    </location>
</feature>
<feature type="site" description="May prevent sphingomyelin recognition" evidence="8">
    <location>
        <position position="128"/>
    </location>
</feature>
<feature type="disulfide bond" evidence="3">
    <location>
        <begin position="45"/>
        <end position="51"/>
    </location>
</feature>
<feature type="disulfide bond" evidence="3">
    <location>
        <begin position="47"/>
        <end position="191"/>
    </location>
</feature>
<feature type="non-terminal residue">
    <location>
        <position position="1"/>
    </location>
</feature>
<proteinExistence type="evidence at transcript level"/>
<accession>C0JB39</accession>